<comment type="function">
    <text evidence="1 6 8">Transcription factor (PubMed:29967452). Acts as a transcriptional activator by binding to promoter regions of target genes, such as PDCD4, PIK3IP1, MXD4, PNRC1, and RFX5 (PubMed:29967452, PubMed:34197623). Plays a role in natural killer (NK) cell maintenance and immunity (PubMed:29967452). May play a role in the process of ciliogenesis in the neural tube and neural tube closure (By similarity).</text>
</comment>
<comment type="subunit">
    <text evidence="5 12">Interacts (via PxLPxI/L motif) with RFXANK (via ankyrin repeats) (PubMed:25752541). Interacts (via PxLPxI/L motif) with ANKRA2 (via ankyrin repeats) (PubMed:25752541).</text>
</comment>
<comment type="interaction">
    <interactant intactId="EBI-1222187">
        <id>Q2KHR2</id>
    </interactant>
    <interactant intactId="EBI-10215533">
        <id>Q9H9E1</id>
        <label>ANKRA2</label>
    </interactant>
    <organismsDiffer>false</organismsDiffer>
    <experiments>2</experiments>
</comment>
<comment type="interaction">
    <interactant intactId="EBI-1222187">
        <id>Q2KHR2</id>
    </interactant>
    <interactant intactId="EBI-1057665">
        <id>O14593</id>
        <label>RFXANK</label>
    </interactant>
    <organismsDiffer>false</organismsDiffer>
    <experiments>5</experiments>
</comment>
<comment type="subcellular location">
    <subcellularLocation>
        <location evidence="2">Nucleus</location>
    </subcellularLocation>
</comment>
<comment type="alternative products">
    <event type="alternative splicing"/>
    <isoform>
        <id>Q2KHR2-3</id>
        <name>1</name>
        <sequence type="displayed"/>
    </isoform>
    <isoform>
        <id>Q2KHR2-1</id>
        <name>3</name>
        <sequence type="described" ref="VSP_062138"/>
    </isoform>
    <isoform>
        <id>Q2KHR2-2</id>
        <name>2</name>
        <sequence type="described" ref="VSP_062139"/>
    </isoform>
</comment>
<comment type="tissue specificity">
    <text evidence="4 7">Widely expressed in many different tissue types including thymus and placenta, with high expression in brain (PubMed:18673564). Expressed in both inhibitory and excitatory neurons in cortex (PubMed:33658631).</text>
</comment>
<comment type="developmental stage">
    <text evidence="7">Expressed in interneurons from the medial ganglionic eminence in developing cortex.</text>
</comment>
<comment type="domain">
    <text evidence="5 12">The PxLPxI/L motif mediates interaction with ankyrin repeats of ANKRA2 and RFXANK.</text>
</comment>
<comment type="disease" evidence="7 9">
    <disease id="DI-06659">
        <name>Intellectual developmental disorder, autosomal dominant 71, with behavioral abnormalities</name>
        <acronym>MRD71</acronym>
        <description>An autosomal dominant neurodevelopmental disorder characterized by global developmental delay, hypotonia, speech delay, and impaired intellectual development. Most patients manifest neurobehavioral features including autism spectrum disorder and attention-deficit/hyperactivity disorder. Other frequent features include hypersensitivity to sensory stimuli and sleep problems.</description>
        <dbReference type="MIM" id="620330"/>
    </disease>
    <text>The disease is caused by variants affecting the gene represented in this entry.</text>
</comment>
<comment type="similarity">
    <text evidence="2">Belongs to the RFX family.</text>
</comment>
<comment type="sequence caution" evidence="10">
    <conflict type="erroneous initiation">
        <sequence resource="EMBL-CDS" id="BAB14381"/>
    </conflict>
    <text>Truncated N-terminus.</text>
</comment>
<comment type="sequence caution" evidence="10">
    <conflict type="erroneous initiation">
        <sequence resource="EMBL-CDS" id="BAB14988"/>
    </conflict>
    <text>Truncated N-terminus.</text>
</comment>
<comment type="sequence caution" evidence="10">
    <conflict type="erroneous initiation">
        <sequence resource="EMBL-CDS" id="BAC86441"/>
    </conflict>
    <text>Truncated N-terminus.</text>
</comment>
<evidence type="ECO:0000250" key="1">
    <source>
        <dbReference type="UniProtKB" id="A0A1L8H0H2"/>
    </source>
</evidence>
<evidence type="ECO:0000255" key="2">
    <source>
        <dbReference type="PROSITE-ProRule" id="PRU00858"/>
    </source>
</evidence>
<evidence type="ECO:0000256" key="3">
    <source>
        <dbReference type="SAM" id="MobiDB-lite"/>
    </source>
</evidence>
<evidence type="ECO:0000269" key="4">
    <source>
    </source>
</evidence>
<evidence type="ECO:0000269" key="5">
    <source>
    </source>
</evidence>
<evidence type="ECO:0000269" key="6">
    <source>
    </source>
</evidence>
<evidence type="ECO:0000269" key="7">
    <source>
    </source>
</evidence>
<evidence type="ECO:0000269" key="8">
    <source>
    </source>
</evidence>
<evidence type="ECO:0000269" key="9">
    <source>
    </source>
</evidence>
<evidence type="ECO:0000305" key="10"/>
<evidence type="ECO:0000312" key="11">
    <source>
        <dbReference type="HGNC" id="HGNC:25777"/>
    </source>
</evidence>
<evidence type="ECO:0000312" key="12">
    <source>
        <dbReference type="PDB" id="6MEW"/>
    </source>
</evidence>
<evidence type="ECO:0007744" key="13">
    <source>
    </source>
</evidence>
<evidence type="ECO:0007744" key="14">
    <source>
    </source>
</evidence>
<evidence type="ECO:0007744" key="15">
    <source>
    </source>
</evidence>
<evidence type="ECO:0007744" key="16">
    <source>
    </source>
</evidence>
<evidence type="ECO:0007744" key="17">
    <source>
    </source>
</evidence>
<dbReference type="EMBL" id="AK023056">
    <property type="protein sequence ID" value="BAB14381.1"/>
    <property type="status" value="ALT_INIT"/>
    <property type="molecule type" value="mRNA"/>
</dbReference>
<dbReference type="EMBL" id="AK024757">
    <property type="protein sequence ID" value="BAB14988.1"/>
    <property type="status" value="ALT_INIT"/>
    <property type="molecule type" value="mRNA"/>
</dbReference>
<dbReference type="EMBL" id="AK126103">
    <property type="protein sequence ID" value="BAC86441.1"/>
    <property type="status" value="ALT_INIT"/>
    <property type="molecule type" value="mRNA"/>
</dbReference>
<dbReference type="EMBL" id="AK128045">
    <property type="protein sequence ID" value="BAC87248.1"/>
    <property type="molecule type" value="mRNA"/>
</dbReference>
<dbReference type="EMBL" id="AC068726">
    <property type="status" value="NOT_ANNOTATED_CDS"/>
    <property type="molecule type" value="Genomic_DNA"/>
</dbReference>
<dbReference type="EMBL" id="AC084783">
    <property type="status" value="NOT_ANNOTATED_CDS"/>
    <property type="molecule type" value="Genomic_DNA"/>
</dbReference>
<dbReference type="EMBL" id="AC247040">
    <property type="status" value="NOT_ANNOTATED_CDS"/>
    <property type="molecule type" value="Genomic_DNA"/>
</dbReference>
<dbReference type="EMBL" id="BC112936">
    <property type="protein sequence ID" value="AAI12937.1"/>
    <property type="molecule type" value="mRNA"/>
</dbReference>
<dbReference type="EMBL" id="AL834302">
    <property type="protein sequence ID" value="CAD38972.1"/>
    <property type="molecule type" value="mRNA"/>
</dbReference>
<dbReference type="CCDS" id="CCDS92003.1">
    <molecule id="Q2KHR2-1"/>
</dbReference>
<dbReference type="CCDS" id="CCDS92005.1">
    <molecule id="Q2KHR2-3"/>
</dbReference>
<dbReference type="RefSeq" id="NP_001355002.1">
    <molecule id="Q2KHR2-1"/>
    <property type="nucleotide sequence ID" value="NM_001368073.2"/>
</dbReference>
<dbReference type="RefSeq" id="NP_001355003.1">
    <molecule id="Q2KHR2-1"/>
    <property type="nucleotide sequence ID" value="NM_001368074.1"/>
</dbReference>
<dbReference type="RefSeq" id="NP_001357490.1">
    <molecule id="Q2KHR2-3"/>
    <property type="nucleotide sequence ID" value="NM_001370561.1"/>
</dbReference>
<dbReference type="RefSeq" id="NP_073752.5">
    <molecule id="Q2KHR2-3"/>
    <property type="nucleotide sequence ID" value="NM_022841.5"/>
</dbReference>
<dbReference type="RefSeq" id="XP_005254660.2">
    <property type="nucleotide sequence ID" value="XM_005254603.3"/>
</dbReference>
<dbReference type="RefSeq" id="XP_011520227.1">
    <property type="nucleotide sequence ID" value="XM_011521925.2"/>
</dbReference>
<dbReference type="RefSeq" id="XP_016877995.1">
    <property type="nucleotide sequence ID" value="XM_017022506.1"/>
</dbReference>
<dbReference type="RefSeq" id="XP_016877996.1">
    <property type="nucleotide sequence ID" value="XM_017022507.1"/>
</dbReference>
<dbReference type="RefSeq" id="XP_016877997.1">
    <property type="nucleotide sequence ID" value="XM_017022508.1"/>
</dbReference>
<dbReference type="RefSeq" id="XP_047288904.1">
    <molecule id="Q2KHR2-3"/>
    <property type="nucleotide sequence ID" value="XM_047432948.1"/>
</dbReference>
<dbReference type="RefSeq" id="XP_047288905.1">
    <molecule id="Q2KHR2-1"/>
    <property type="nucleotide sequence ID" value="XM_047432949.1"/>
</dbReference>
<dbReference type="RefSeq" id="XP_047288906.1">
    <molecule id="Q2KHR2-1"/>
    <property type="nucleotide sequence ID" value="XM_047432950.1"/>
</dbReference>
<dbReference type="RefSeq" id="XP_047288907.1">
    <molecule id="Q2KHR2-1"/>
    <property type="nucleotide sequence ID" value="XM_047432951.1"/>
</dbReference>
<dbReference type="RefSeq" id="XP_054234607.1">
    <molecule id="Q2KHR2-1"/>
    <property type="nucleotide sequence ID" value="XM_054378632.1"/>
</dbReference>
<dbReference type="RefSeq" id="XP_054234608.1">
    <molecule id="Q2KHR2-1"/>
    <property type="nucleotide sequence ID" value="XM_054378633.1"/>
</dbReference>
<dbReference type="RefSeq" id="XP_054234609.1">
    <molecule id="Q2KHR2-1"/>
    <property type="nucleotide sequence ID" value="XM_054378634.1"/>
</dbReference>
<dbReference type="PDB" id="4QQI">
    <property type="method" value="X-ray"/>
    <property type="resolution" value="2.03 A"/>
    <property type="chains" value="X=182-198"/>
</dbReference>
<dbReference type="PDB" id="6MEW">
    <property type="method" value="X-ray"/>
    <property type="resolution" value="1.78 A"/>
    <property type="chains" value="B/D=182-198"/>
</dbReference>
<dbReference type="PDBsum" id="4QQI"/>
<dbReference type="PDBsum" id="6MEW"/>
<dbReference type="SMR" id="Q2KHR2"/>
<dbReference type="BioGRID" id="122335">
    <property type="interactions" value="23"/>
</dbReference>
<dbReference type="ELM" id="Q2KHR2"/>
<dbReference type="FunCoup" id="Q2KHR2">
    <property type="interactions" value="1139"/>
</dbReference>
<dbReference type="IntAct" id="Q2KHR2">
    <property type="interactions" value="16"/>
</dbReference>
<dbReference type="STRING" id="9606.ENSP00000501317"/>
<dbReference type="GlyCosmos" id="Q2KHR2">
    <property type="glycosylation" value="1 site, 1 glycan"/>
</dbReference>
<dbReference type="GlyGen" id="Q2KHR2">
    <property type="glycosylation" value="9 sites, 1 O-linked glycan (1 site)"/>
</dbReference>
<dbReference type="iPTMnet" id="Q2KHR2"/>
<dbReference type="PhosphoSitePlus" id="Q2KHR2"/>
<dbReference type="BioMuta" id="RFX7"/>
<dbReference type="DMDM" id="121946796"/>
<dbReference type="jPOST" id="Q2KHR2"/>
<dbReference type="MassIVE" id="Q2KHR2"/>
<dbReference type="PaxDb" id="9606-ENSP00000453281"/>
<dbReference type="PeptideAtlas" id="Q2KHR2"/>
<dbReference type="ProteomicsDB" id="61305">
    <molecule id="Q2KHR2-1"/>
</dbReference>
<dbReference type="ProteomicsDB" id="61306">
    <molecule id="Q2KHR2-2"/>
</dbReference>
<dbReference type="Pumba" id="Q2KHR2"/>
<dbReference type="Antibodypedia" id="25133">
    <property type="antibodies" value="54 antibodies from 10 providers"/>
</dbReference>
<dbReference type="DNASU" id="64864"/>
<dbReference type="Ensembl" id="ENST00000559447.8">
    <molecule id="Q2KHR2-3"/>
    <property type="protein sequence ID" value="ENSP00000453281.3"/>
    <property type="gene ID" value="ENSG00000181827.16"/>
</dbReference>
<dbReference type="Ensembl" id="ENST00000673997.1">
    <molecule id="Q2KHR2-1"/>
    <property type="protein sequence ID" value="ENSP00000501278.1"/>
    <property type="gene ID" value="ENSG00000181827.16"/>
</dbReference>
<dbReference type="Ensembl" id="ENST00000674082.1">
    <molecule id="Q2KHR2-1"/>
    <property type="protein sequence ID" value="ENSP00000501248.1"/>
    <property type="gene ID" value="ENSG00000181827.16"/>
</dbReference>
<dbReference type="GeneID" id="64864"/>
<dbReference type="KEGG" id="hsa:64864"/>
<dbReference type="MANE-Select" id="ENST00000559447.8">
    <property type="protein sequence ID" value="ENSP00000453281.3"/>
    <property type="RefSeq nucleotide sequence ID" value="NM_022841.7"/>
    <property type="RefSeq protein sequence ID" value="NP_073752.6"/>
</dbReference>
<dbReference type="UCSC" id="uc059jng.1">
    <molecule id="Q2KHR2-3"/>
    <property type="organism name" value="human"/>
</dbReference>
<dbReference type="AGR" id="HGNC:25777"/>
<dbReference type="CTD" id="64864"/>
<dbReference type="DisGeNET" id="64864"/>
<dbReference type="GeneCards" id="RFX7"/>
<dbReference type="HGNC" id="HGNC:25777">
    <property type="gene designation" value="RFX7"/>
</dbReference>
<dbReference type="HPA" id="ENSG00000181827">
    <property type="expression patterns" value="Low tissue specificity"/>
</dbReference>
<dbReference type="MalaCards" id="RFX7"/>
<dbReference type="MIM" id="612660">
    <property type="type" value="gene"/>
</dbReference>
<dbReference type="MIM" id="620330">
    <property type="type" value="phenotype"/>
</dbReference>
<dbReference type="neXtProt" id="NX_Q2KHR2"/>
<dbReference type="OpenTargets" id="ENSG00000181827"/>
<dbReference type="PharmGKB" id="PA162401255"/>
<dbReference type="VEuPathDB" id="HostDB:ENSG00000181827"/>
<dbReference type="eggNOG" id="KOG3712">
    <property type="taxonomic scope" value="Eukaryota"/>
</dbReference>
<dbReference type="GeneTree" id="ENSGT01050000244970"/>
<dbReference type="HOGENOM" id="CLU_252972_0_0_1"/>
<dbReference type="InParanoid" id="Q2KHR2"/>
<dbReference type="OMA" id="QCQENPD"/>
<dbReference type="OrthoDB" id="10069709at2759"/>
<dbReference type="PAN-GO" id="Q2KHR2">
    <property type="GO annotations" value="3 GO annotations based on evolutionary models"/>
</dbReference>
<dbReference type="PhylomeDB" id="Q2KHR2"/>
<dbReference type="TreeFam" id="TF321340"/>
<dbReference type="PathwayCommons" id="Q2KHR2"/>
<dbReference type="SignaLink" id="Q2KHR2"/>
<dbReference type="BioGRID-ORCS" id="64864">
    <property type="hits" value="27 hits in 382 CRISPR screens"/>
</dbReference>
<dbReference type="ChiTaRS" id="RFX7">
    <property type="organism name" value="human"/>
</dbReference>
<dbReference type="GenomeRNAi" id="64864"/>
<dbReference type="Pharos" id="Q2KHR2">
    <property type="development level" value="Tdark"/>
</dbReference>
<dbReference type="PRO" id="PR:Q2KHR2"/>
<dbReference type="Proteomes" id="UP000005640">
    <property type="component" value="Chromosome 15"/>
</dbReference>
<dbReference type="RNAct" id="Q2KHR2">
    <property type="molecule type" value="protein"/>
</dbReference>
<dbReference type="Bgee" id="ENSG00000181827">
    <property type="expression patterns" value="Expressed in skeletal muscle tissue of rectus abdominis and 184 other cell types or tissues"/>
</dbReference>
<dbReference type="ExpressionAtlas" id="Q2KHR2">
    <property type="expression patterns" value="baseline and differential"/>
</dbReference>
<dbReference type="GO" id="GO:0000785">
    <property type="term" value="C:chromatin"/>
    <property type="evidence" value="ECO:0000247"/>
    <property type="project" value="NTNU_SB"/>
</dbReference>
<dbReference type="GO" id="GO:0005634">
    <property type="term" value="C:nucleus"/>
    <property type="evidence" value="ECO:0000250"/>
    <property type="project" value="UniProtKB"/>
</dbReference>
<dbReference type="GO" id="GO:0000981">
    <property type="term" value="F:DNA-binding transcription factor activity, RNA polymerase II-specific"/>
    <property type="evidence" value="ECO:0000247"/>
    <property type="project" value="NTNU_SB"/>
</dbReference>
<dbReference type="GO" id="GO:0000978">
    <property type="term" value="F:RNA polymerase II cis-regulatory region sequence-specific DNA binding"/>
    <property type="evidence" value="ECO:0000318"/>
    <property type="project" value="GO_Central"/>
</dbReference>
<dbReference type="GO" id="GO:0000979">
    <property type="term" value="F:RNA polymerase II core promoter sequence-specific DNA binding"/>
    <property type="evidence" value="ECO:0000314"/>
    <property type="project" value="UniProtKB"/>
</dbReference>
<dbReference type="GO" id="GO:1990837">
    <property type="term" value="F:sequence-specific double-stranded DNA binding"/>
    <property type="evidence" value="ECO:0000314"/>
    <property type="project" value="ARUK-UCL"/>
</dbReference>
<dbReference type="GO" id="GO:0045944">
    <property type="term" value="P:positive regulation of transcription by RNA polymerase II"/>
    <property type="evidence" value="ECO:0000314"/>
    <property type="project" value="UniProtKB"/>
</dbReference>
<dbReference type="GO" id="GO:0006357">
    <property type="term" value="P:regulation of transcription by RNA polymerase II"/>
    <property type="evidence" value="ECO:0000318"/>
    <property type="project" value="GO_Central"/>
</dbReference>
<dbReference type="FunFam" id="1.10.10.10:FF:000128">
    <property type="entry name" value="DNA-binding protein RFX5 isoform X1"/>
    <property type="match status" value="1"/>
</dbReference>
<dbReference type="Gene3D" id="6.10.140.1290">
    <property type="match status" value="1"/>
</dbReference>
<dbReference type="Gene3D" id="1.10.10.10">
    <property type="entry name" value="Winged helix-like DNA-binding domain superfamily/Winged helix DNA-binding domain"/>
    <property type="match status" value="1"/>
</dbReference>
<dbReference type="InterPro" id="IPR003150">
    <property type="entry name" value="DNA-bd_RFX"/>
</dbReference>
<dbReference type="InterPro" id="IPR039779">
    <property type="entry name" value="RFX-like"/>
</dbReference>
<dbReference type="InterPro" id="IPR036388">
    <property type="entry name" value="WH-like_DNA-bd_sf"/>
</dbReference>
<dbReference type="InterPro" id="IPR036390">
    <property type="entry name" value="WH_DNA-bd_sf"/>
</dbReference>
<dbReference type="PANTHER" id="PTHR12619:SF2">
    <property type="entry name" value="DNA-BINDING PROTEIN RFX7"/>
    <property type="match status" value="1"/>
</dbReference>
<dbReference type="PANTHER" id="PTHR12619">
    <property type="entry name" value="RFX TRANSCRIPTION FACTOR FAMILY"/>
    <property type="match status" value="1"/>
</dbReference>
<dbReference type="Pfam" id="PF18326">
    <property type="entry name" value="RFX5_N"/>
    <property type="match status" value="1"/>
</dbReference>
<dbReference type="Pfam" id="PF02257">
    <property type="entry name" value="RFX_DNA_binding"/>
    <property type="match status" value="1"/>
</dbReference>
<dbReference type="SUPFAM" id="SSF46785">
    <property type="entry name" value="Winged helix' DNA-binding domain"/>
    <property type="match status" value="1"/>
</dbReference>
<dbReference type="PROSITE" id="PS51526">
    <property type="entry name" value="RFX_DBD"/>
    <property type="match status" value="1"/>
</dbReference>
<name>RFX7_HUMAN</name>
<accession>Q2KHR2</accession>
<accession>Q6ZRR1</accession>
<accession>Q6ZTY6</accession>
<accession>Q8N3J0</accession>
<accession>Q9H7A9</accession>
<accession>Q9H956</accession>
<reference key="1">
    <citation type="journal article" date="2004" name="Nat. Genet.">
        <title>Complete sequencing and characterization of 21,243 full-length human cDNAs.</title>
        <authorList>
            <person name="Ota T."/>
            <person name="Suzuki Y."/>
            <person name="Nishikawa T."/>
            <person name="Otsuki T."/>
            <person name="Sugiyama T."/>
            <person name="Irie R."/>
            <person name="Wakamatsu A."/>
            <person name="Hayashi K."/>
            <person name="Sato H."/>
            <person name="Nagai K."/>
            <person name="Kimura K."/>
            <person name="Makita H."/>
            <person name="Sekine M."/>
            <person name="Obayashi M."/>
            <person name="Nishi T."/>
            <person name="Shibahara T."/>
            <person name="Tanaka T."/>
            <person name="Ishii S."/>
            <person name="Yamamoto J."/>
            <person name="Saito K."/>
            <person name="Kawai Y."/>
            <person name="Isono Y."/>
            <person name="Nakamura Y."/>
            <person name="Nagahari K."/>
            <person name="Murakami K."/>
            <person name="Yasuda T."/>
            <person name="Iwayanagi T."/>
            <person name="Wagatsuma M."/>
            <person name="Shiratori A."/>
            <person name="Sudo H."/>
            <person name="Hosoiri T."/>
            <person name="Kaku Y."/>
            <person name="Kodaira H."/>
            <person name="Kondo H."/>
            <person name="Sugawara M."/>
            <person name="Takahashi M."/>
            <person name="Kanda K."/>
            <person name="Yokoi T."/>
            <person name="Furuya T."/>
            <person name="Kikkawa E."/>
            <person name="Omura Y."/>
            <person name="Abe K."/>
            <person name="Kamihara K."/>
            <person name="Katsuta N."/>
            <person name="Sato K."/>
            <person name="Tanikawa M."/>
            <person name="Yamazaki M."/>
            <person name="Ninomiya K."/>
            <person name="Ishibashi T."/>
            <person name="Yamashita H."/>
            <person name="Murakawa K."/>
            <person name="Fujimori K."/>
            <person name="Tanai H."/>
            <person name="Kimata M."/>
            <person name="Watanabe M."/>
            <person name="Hiraoka S."/>
            <person name="Chiba Y."/>
            <person name="Ishida S."/>
            <person name="Ono Y."/>
            <person name="Takiguchi S."/>
            <person name="Watanabe S."/>
            <person name="Yosida M."/>
            <person name="Hotuta T."/>
            <person name="Kusano J."/>
            <person name="Kanehori K."/>
            <person name="Takahashi-Fujii A."/>
            <person name="Hara H."/>
            <person name="Tanase T.-O."/>
            <person name="Nomura Y."/>
            <person name="Togiya S."/>
            <person name="Komai F."/>
            <person name="Hara R."/>
            <person name="Takeuchi K."/>
            <person name="Arita M."/>
            <person name="Imose N."/>
            <person name="Musashino K."/>
            <person name="Yuuki H."/>
            <person name="Oshima A."/>
            <person name="Sasaki N."/>
            <person name="Aotsuka S."/>
            <person name="Yoshikawa Y."/>
            <person name="Matsunawa H."/>
            <person name="Ichihara T."/>
            <person name="Shiohata N."/>
            <person name="Sano S."/>
            <person name="Moriya S."/>
            <person name="Momiyama H."/>
            <person name="Satoh N."/>
            <person name="Takami S."/>
            <person name="Terashima Y."/>
            <person name="Suzuki O."/>
            <person name="Nakagawa S."/>
            <person name="Senoh A."/>
            <person name="Mizoguchi H."/>
            <person name="Goto Y."/>
            <person name="Shimizu F."/>
            <person name="Wakebe H."/>
            <person name="Hishigaki H."/>
            <person name="Watanabe T."/>
            <person name="Sugiyama A."/>
            <person name="Takemoto M."/>
            <person name="Kawakami B."/>
            <person name="Yamazaki M."/>
            <person name="Watanabe K."/>
            <person name="Kumagai A."/>
            <person name="Itakura S."/>
            <person name="Fukuzumi Y."/>
            <person name="Fujimori Y."/>
            <person name="Komiyama M."/>
            <person name="Tashiro H."/>
            <person name="Tanigami A."/>
            <person name="Fujiwara T."/>
            <person name="Ono T."/>
            <person name="Yamada K."/>
            <person name="Fujii Y."/>
            <person name="Ozaki K."/>
            <person name="Hirao M."/>
            <person name="Ohmori Y."/>
            <person name="Kawabata A."/>
            <person name="Hikiji T."/>
            <person name="Kobatake N."/>
            <person name="Inagaki H."/>
            <person name="Ikema Y."/>
            <person name="Okamoto S."/>
            <person name="Okitani R."/>
            <person name="Kawakami T."/>
            <person name="Noguchi S."/>
            <person name="Itoh T."/>
            <person name="Shigeta K."/>
            <person name="Senba T."/>
            <person name="Matsumura K."/>
            <person name="Nakajima Y."/>
            <person name="Mizuno T."/>
            <person name="Morinaga M."/>
            <person name="Sasaki M."/>
            <person name="Togashi T."/>
            <person name="Oyama M."/>
            <person name="Hata H."/>
            <person name="Watanabe M."/>
            <person name="Komatsu T."/>
            <person name="Mizushima-Sugano J."/>
            <person name="Satoh T."/>
            <person name="Shirai Y."/>
            <person name="Takahashi Y."/>
            <person name="Nakagawa K."/>
            <person name="Okumura K."/>
            <person name="Nagase T."/>
            <person name="Nomura N."/>
            <person name="Kikuchi H."/>
            <person name="Masuho Y."/>
            <person name="Yamashita R."/>
            <person name="Nakai K."/>
            <person name="Yada T."/>
            <person name="Nakamura Y."/>
            <person name="Ohara O."/>
            <person name="Isogai T."/>
            <person name="Sugano S."/>
        </authorList>
    </citation>
    <scope>NUCLEOTIDE SEQUENCE [LARGE SCALE MRNA] (ISOFORM 2)</scope>
    <scope>NUCLEOTIDE SEQUENCE [LARGE SCALE MRNA] OF 284-1460 (ISOFORM 3)</scope>
    <source>
        <tissue>Testis</tissue>
    </source>
</reference>
<reference key="2">
    <citation type="journal article" date="2006" name="Nature">
        <title>Analysis of the DNA sequence and duplication history of human chromosome 15.</title>
        <authorList>
            <person name="Zody M.C."/>
            <person name="Garber M."/>
            <person name="Sharpe T."/>
            <person name="Young S.K."/>
            <person name="Rowen L."/>
            <person name="O'Neill K."/>
            <person name="Whittaker C.A."/>
            <person name="Kamal M."/>
            <person name="Chang J.L."/>
            <person name="Cuomo C.A."/>
            <person name="Dewar K."/>
            <person name="FitzGerald M.G."/>
            <person name="Kodira C.D."/>
            <person name="Madan A."/>
            <person name="Qin S."/>
            <person name="Yang X."/>
            <person name="Abbasi N."/>
            <person name="Abouelleil A."/>
            <person name="Arachchi H.M."/>
            <person name="Baradarani L."/>
            <person name="Birditt B."/>
            <person name="Bloom S."/>
            <person name="Bloom T."/>
            <person name="Borowsky M.L."/>
            <person name="Burke J."/>
            <person name="Butler J."/>
            <person name="Cook A."/>
            <person name="DeArellano K."/>
            <person name="DeCaprio D."/>
            <person name="Dorris L. III"/>
            <person name="Dors M."/>
            <person name="Eichler E.E."/>
            <person name="Engels R."/>
            <person name="Fahey J."/>
            <person name="Fleetwood P."/>
            <person name="Friedman C."/>
            <person name="Gearin G."/>
            <person name="Hall J.L."/>
            <person name="Hensley G."/>
            <person name="Johnson E."/>
            <person name="Jones C."/>
            <person name="Kamat A."/>
            <person name="Kaur A."/>
            <person name="Locke D.P."/>
            <person name="Madan A."/>
            <person name="Munson G."/>
            <person name="Jaffe D.B."/>
            <person name="Lui A."/>
            <person name="Macdonald P."/>
            <person name="Mauceli E."/>
            <person name="Naylor J.W."/>
            <person name="Nesbitt R."/>
            <person name="Nicol R."/>
            <person name="O'Leary S.B."/>
            <person name="Ratcliffe A."/>
            <person name="Rounsley S."/>
            <person name="She X."/>
            <person name="Sneddon K.M.B."/>
            <person name="Stewart S."/>
            <person name="Sougnez C."/>
            <person name="Stone S.M."/>
            <person name="Topham K."/>
            <person name="Vincent D."/>
            <person name="Wang S."/>
            <person name="Zimmer A.R."/>
            <person name="Birren B.W."/>
            <person name="Hood L."/>
            <person name="Lander E.S."/>
            <person name="Nusbaum C."/>
        </authorList>
    </citation>
    <scope>NUCLEOTIDE SEQUENCE [LARGE SCALE GENOMIC DNA]</scope>
</reference>
<reference key="3">
    <citation type="journal article" date="2004" name="Genome Res.">
        <title>The status, quality, and expansion of the NIH full-length cDNA project: the Mammalian Gene Collection (MGC).</title>
        <authorList>
            <consortium name="The MGC Project Team"/>
        </authorList>
    </citation>
    <scope>NUCLEOTIDE SEQUENCE [LARGE SCALE MRNA] (ISOFORM 3)</scope>
    <source>
        <tissue>Testis</tissue>
    </source>
</reference>
<reference key="4">
    <citation type="journal article" date="2007" name="BMC Genomics">
        <title>The full-ORF clone resource of the German cDNA consortium.</title>
        <authorList>
            <person name="Bechtel S."/>
            <person name="Rosenfelder H."/>
            <person name="Duda A."/>
            <person name="Schmidt C.P."/>
            <person name="Ernst U."/>
            <person name="Wellenreuther R."/>
            <person name="Mehrle A."/>
            <person name="Schuster C."/>
            <person name="Bahr A."/>
            <person name="Bloecker H."/>
            <person name="Heubner D."/>
            <person name="Hoerlein A."/>
            <person name="Michel G."/>
            <person name="Wedler H."/>
            <person name="Koehrer K."/>
            <person name="Ottenwaelder B."/>
            <person name="Poustka A."/>
            <person name="Wiemann S."/>
            <person name="Schupp I."/>
        </authorList>
    </citation>
    <scope>NUCLEOTIDE SEQUENCE [LARGE SCALE MRNA] OF 1065-1460 (ISOFORM 3)</scope>
    <source>
        <tissue>Melanoma</tissue>
    </source>
</reference>
<reference key="5">
    <citation type="journal article" date="2008" name="BMC Evol. Biol.">
        <title>Identification and characterization of novel human tissue-specific RFX transcription factors.</title>
        <authorList>
            <person name="Aftab S."/>
            <person name="Semenec L."/>
            <person name="Chu J.S.-C."/>
            <person name="Chen N."/>
        </authorList>
    </citation>
    <scope>IDENTIFICATION</scope>
    <scope>TISSUE SPECIFICITY</scope>
</reference>
<reference key="6">
    <citation type="journal article" date="2008" name="J. Proteome Res.">
        <title>Combining protein-based IMAC, peptide-based IMAC, and MudPIT for efficient phosphoproteomic analysis.</title>
        <authorList>
            <person name="Cantin G.T."/>
            <person name="Yi W."/>
            <person name="Lu B."/>
            <person name="Park S.K."/>
            <person name="Xu T."/>
            <person name="Lee J.-D."/>
            <person name="Yates J.R. III"/>
        </authorList>
    </citation>
    <scope>IDENTIFICATION BY MASS SPECTROMETRY [LARGE SCALE ANALYSIS]</scope>
    <source>
        <tissue>Cervix carcinoma</tissue>
    </source>
</reference>
<reference key="7">
    <citation type="journal article" date="2008" name="Mol. Cell">
        <title>Kinase-selective enrichment enables quantitative phosphoproteomics of the kinome across the cell cycle.</title>
        <authorList>
            <person name="Daub H."/>
            <person name="Olsen J.V."/>
            <person name="Bairlein M."/>
            <person name="Gnad F."/>
            <person name="Oppermann F.S."/>
            <person name="Korner R."/>
            <person name="Greff Z."/>
            <person name="Keri G."/>
            <person name="Stemmann O."/>
            <person name="Mann M."/>
        </authorList>
    </citation>
    <scope>IDENTIFICATION BY MASS SPECTROMETRY [LARGE SCALE ANALYSIS]</scope>
    <source>
        <tissue>Cervix carcinoma</tissue>
    </source>
</reference>
<reference key="8">
    <citation type="journal article" date="2009" name="Anal. Chem.">
        <title>Lys-N and trypsin cover complementary parts of the phosphoproteome in a refined SCX-based approach.</title>
        <authorList>
            <person name="Gauci S."/>
            <person name="Helbig A.O."/>
            <person name="Slijper M."/>
            <person name="Krijgsveld J."/>
            <person name="Heck A.J."/>
            <person name="Mohammed S."/>
        </authorList>
    </citation>
    <scope>IDENTIFICATION BY MASS SPECTROMETRY [LARGE SCALE ANALYSIS]</scope>
</reference>
<reference key="9">
    <citation type="journal article" date="2009" name="Sci. Signal.">
        <title>Quantitative phosphoproteomic analysis of T cell receptor signaling reveals system-wide modulation of protein-protein interactions.</title>
        <authorList>
            <person name="Mayya V."/>
            <person name="Lundgren D.H."/>
            <person name="Hwang S.-I."/>
            <person name="Rezaul K."/>
            <person name="Wu L."/>
            <person name="Eng J.K."/>
            <person name="Rodionov V."/>
            <person name="Han D.K."/>
        </authorList>
    </citation>
    <scope>PHOSPHORYLATION [LARGE SCALE ANALYSIS] AT SER-379; SER-455; THR-988; SER-1178 AND SER-1329</scope>
    <scope>IDENTIFICATION BY MASS SPECTROMETRY [LARGE SCALE ANALYSIS]</scope>
    <source>
        <tissue>Leukemic T-cell</tissue>
    </source>
</reference>
<reference key="10">
    <citation type="journal article" date="2009" name="Science">
        <title>Lysine acetylation targets protein complexes and co-regulates major cellular functions.</title>
        <authorList>
            <person name="Choudhary C."/>
            <person name="Kumar C."/>
            <person name="Gnad F."/>
            <person name="Nielsen M.L."/>
            <person name="Rehman M."/>
            <person name="Walther T.C."/>
            <person name="Olsen J.V."/>
            <person name="Mann M."/>
        </authorList>
    </citation>
    <scope>ACETYLATION [LARGE SCALE ANALYSIS] AT LYS-704</scope>
    <scope>IDENTIFICATION BY MASS SPECTROMETRY [LARGE SCALE ANALYSIS]</scope>
</reference>
<reference key="11">
    <citation type="journal article" date="2010" name="Sci. Signal.">
        <title>Quantitative phosphoproteomics reveals widespread full phosphorylation site occupancy during mitosis.</title>
        <authorList>
            <person name="Olsen J.V."/>
            <person name="Vermeulen M."/>
            <person name="Santamaria A."/>
            <person name="Kumar C."/>
            <person name="Miller M.L."/>
            <person name="Jensen L.J."/>
            <person name="Gnad F."/>
            <person name="Cox J."/>
            <person name="Jensen T.S."/>
            <person name="Nigg E.A."/>
            <person name="Brunak S."/>
            <person name="Mann M."/>
        </authorList>
    </citation>
    <scope>PHOSPHORYLATION [LARGE SCALE ANALYSIS] AT SER-1178</scope>
    <scope>IDENTIFICATION BY MASS SPECTROMETRY [LARGE SCALE ANALYSIS]</scope>
    <source>
        <tissue>Cervix carcinoma</tissue>
    </source>
</reference>
<reference key="12">
    <citation type="journal article" date="2011" name="BMC Syst. Biol.">
        <title>Initial characterization of the human central proteome.</title>
        <authorList>
            <person name="Burkard T.R."/>
            <person name="Planyavsky M."/>
            <person name="Kaupe I."/>
            <person name="Breitwieser F.P."/>
            <person name="Buerckstuemmer T."/>
            <person name="Bennett K.L."/>
            <person name="Superti-Furga G."/>
            <person name="Colinge J."/>
        </authorList>
    </citation>
    <scope>IDENTIFICATION BY MASS SPECTROMETRY [LARGE SCALE ANALYSIS]</scope>
</reference>
<reference key="13">
    <citation type="journal article" date="2011" name="Sci. Signal.">
        <title>System-wide temporal characterization of the proteome and phosphoproteome of human embryonic stem cell differentiation.</title>
        <authorList>
            <person name="Rigbolt K.T."/>
            <person name="Prokhorova T.A."/>
            <person name="Akimov V."/>
            <person name="Henningsen J."/>
            <person name="Johansen P.T."/>
            <person name="Kratchmarova I."/>
            <person name="Kassem M."/>
            <person name="Mann M."/>
            <person name="Olsen J.V."/>
            <person name="Blagoev B."/>
        </authorList>
    </citation>
    <scope>PHOSPHORYLATION [LARGE SCALE ANALYSIS] AT SER-1178</scope>
    <scope>IDENTIFICATION BY MASS SPECTROMETRY [LARGE SCALE ANALYSIS]</scope>
</reference>
<reference key="14">
    <citation type="journal article" date="2013" name="J. Proteome Res.">
        <title>Toward a comprehensive characterization of a human cancer cell phosphoproteome.</title>
        <authorList>
            <person name="Zhou H."/>
            <person name="Di Palma S."/>
            <person name="Preisinger C."/>
            <person name="Peng M."/>
            <person name="Polat A.N."/>
            <person name="Heck A.J."/>
            <person name="Mohammed S."/>
        </authorList>
    </citation>
    <scope>PHOSPHORYLATION [LARGE SCALE ANALYSIS] AT SER-322; SER-379; SER-418; SER-455; THR-564; SER-662; THR-988 AND SER-1178</scope>
    <scope>IDENTIFICATION BY MASS SPECTROMETRY [LARGE SCALE ANALYSIS]</scope>
    <source>
        <tissue>Cervix carcinoma</tissue>
        <tissue>Erythroleukemia</tissue>
    </source>
</reference>
<reference key="15">
    <citation type="journal article" date="2014" name="J. Proteomics">
        <title>An enzyme assisted RP-RPLC approach for in-depth analysis of human liver phosphoproteome.</title>
        <authorList>
            <person name="Bian Y."/>
            <person name="Song C."/>
            <person name="Cheng K."/>
            <person name="Dong M."/>
            <person name="Wang F."/>
            <person name="Huang J."/>
            <person name="Sun D."/>
            <person name="Wang L."/>
            <person name="Ye M."/>
            <person name="Zou H."/>
        </authorList>
    </citation>
    <scope>IDENTIFICATION BY MASS SPECTROMETRY [LARGE SCALE ANALYSIS]</scope>
    <source>
        <tissue>Liver</tissue>
    </source>
</reference>
<reference key="16">
    <citation type="journal article" date="2018" name="Nat. Immunol.">
        <title>The transcription factor Rfx7 limits metabolism of NK cells and promotes their maintenance and immunity.</title>
        <authorList>
            <person name="Castro W."/>
            <person name="Chelbi S.T."/>
            <person name="Niogret C."/>
            <person name="Ramon-Barros C."/>
            <person name="Welten S.P.M."/>
            <person name="Osterheld K."/>
            <person name="Wang H."/>
            <person name="Rota G."/>
            <person name="Morgado L."/>
            <person name="Vivier E."/>
            <person name="Raeber M.E."/>
            <person name="Boyman O."/>
            <person name="Delorenzi M."/>
            <person name="Barras D."/>
            <person name="Ho P.C."/>
            <person name="Oxenius A."/>
            <person name="Guarda G."/>
        </authorList>
    </citation>
    <scope>FUNCTION</scope>
</reference>
<reference key="17">
    <citation type="journal article" date="2021" name="Nucleic Acids Res.">
        <title>Transcription factor RFX7 governs a tumor suppressor network in response to p53 and stress.</title>
        <authorList>
            <person name="Coronel L."/>
            <person name="Riege K."/>
            <person name="Schwab K."/>
            <person name="Foerste S."/>
            <person name="Haeckes D."/>
            <person name="Semerau L."/>
            <person name="Bernhart S.H."/>
            <person name="Siebert R."/>
            <person name="Hoffmann S."/>
            <person name="Fischer M."/>
        </authorList>
    </citation>
    <scope>FUNCTION</scope>
</reference>
<reference key="18">
    <citation type="submission" date="2014-06" db="PDB data bank">
        <title>Crystal structure of RFXANK ankyrin repeats in complex with RFX7.</title>
        <authorList>
            <person name="Tempel W."/>
            <person name="Xu C."/>
            <person name="Dong A."/>
            <person name="Li Y."/>
            <person name="Bountra C."/>
            <person name="Arrowsmith C.H."/>
            <person name="Edwards A.M."/>
            <person name="Min J."/>
        </authorList>
    </citation>
    <scope>X-RAY CRYSTALLOGRAPHY (1.78 ANGSTROMS) OF 182-198 IN COMPLEX WITH RFXANK</scope>
    <scope>MOTIF</scope>
</reference>
<reference key="19">
    <citation type="journal article" date="2015" name="Structure">
        <title>Ankyrin repeats of ANKRA2 recognize a PxLPxL motif on the 3M syndrome protein CCDC8.</title>
        <authorList>
            <person name="Nie J."/>
            <person name="Xu C."/>
            <person name="Jin J."/>
            <person name="Aka J.A."/>
            <person name="Tempel W."/>
            <person name="Nguyen V."/>
            <person name="You L."/>
            <person name="Weist R."/>
            <person name="Min J."/>
            <person name="Pawson T."/>
            <person name="Yang X.J."/>
        </authorList>
    </citation>
    <scope>X-RAY CRYSTALLOGRAPHY (2.03 ANGSTROMS) OF 182-198 IN COMPLEX WITH ANKRA2</scope>
    <scope>INTERACTION WITH ANKRA2 AND RFXANK</scope>
    <scope>MOTIF</scope>
</reference>
<reference key="20">
    <citation type="journal article" date="2021" name="Genet. Med.">
        <title>Disruption of RFX family transcription factors causes autism, attention-deficit/hyperactivity disorder, intellectual disability, and dysregulated behavior.</title>
        <authorList>
            <person name="Harris H.K."/>
            <person name="Nakayama T."/>
            <person name="Lai J."/>
            <person name="Zhao B."/>
            <person name="Argyrou N."/>
            <person name="Gubbels C.S."/>
            <person name="Soucy A."/>
            <person name="Genetti C.A."/>
            <person name="Suslovitch V."/>
            <person name="Rodan L.H."/>
            <person name="Tiller G.E."/>
            <person name="Lesca G."/>
            <person name="Gripp K.W."/>
            <person name="Asadollahi R."/>
            <person name="Hamosh A."/>
            <person name="Applegate C.D."/>
            <person name="Turnpenny P.D."/>
            <person name="Simon M.E.H."/>
            <person name="Volker-Touw C.M.L."/>
            <person name="Gassen K.L.I.V."/>
            <person name="Binsbergen E.V."/>
            <person name="Pfundt R."/>
            <person name="Gardeitchik T."/>
            <person name="Vries B.B.A."/>
            <person name="Immken L.L."/>
            <person name="Buchanan C."/>
            <person name="Willing M."/>
            <person name="Toler T.L."/>
            <person name="Fassi E."/>
            <person name="Baker L."/>
            <person name="Vansenne F."/>
            <person name="Wang X."/>
            <person name="Ambrus J.L. Jr."/>
            <person name="Fannemel M."/>
            <person name="Posey J.E."/>
            <person name="Agolini E."/>
            <person name="Novelli A."/>
            <person name="Rauch A."/>
            <person name="Boonsawat P."/>
            <person name="Fagerberg C.R."/>
            <person name="Larsen M.J."/>
            <person name="Kibaek M."/>
            <person name="Labalme A."/>
            <person name="Poisson A."/>
            <person name="Payne K.K."/>
            <person name="Walsh L.E."/>
            <person name="Aldinger K.A."/>
            <person name="Balciuniene J."/>
            <person name="Skraban C."/>
            <person name="Gray C."/>
            <person name="Murrell J."/>
            <person name="Bupp C.P."/>
            <person name="Pascolini G."/>
            <person name="Grammatico P."/>
            <person name="Broly M."/>
            <person name="Kuery S."/>
            <person name="Nizon M."/>
            <person name="Rasool I.G."/>
            <person name="Zahoor M.Y."/>
            <person name="Kraus C."/>
            <person name="Reis A."/>
            <person name="Iqbal M."/>
            <person name="Uguen K."/>
            <person name="Audebert-Bellanger S."/>
            <person name="Ferec C."/>
            <person name="Redon S."/>
            <person name="Baker J."/>
            <person name="Wu Y."/>
            <person name="Zampino G."/>
            <person name="Syrbe S."/>
            <person name="Brosse I."/>
            <person name="Jamra R.A."/>
            <person name="Dobyns W.B."/>
            <person name="Cohen L.L."/>
            <person name="Blomhoff A."/>
            <person name="Mignot C."/>
            <person name="Keren B."/>
            <person name="Courtin T."/>
            <person name="Agrawal P.B."/>
            <person name="Beggs A.H."/>
            <person name="Yu T.W."/>
        </authorList>
    </citation>
    <scope>INVOLVEMENT IN MRD71</scope>
    <scope>VARIANTS MRD71 742-SER--GLY-1460 DEL; 745-GLU--GLY-1460 DEL; 762-GLY--GLY-1460 DEL; 906-TYR--GLY-1460 DEL; 964-PRO-THR-965 DEL; LEU-1028 AND VAL-1029</scope>
    <scope>TISSUE SPECIFICITY</scope>
    <scope>DEVELOPMENTAL STAGE</scope>
</reference>
<reference key="21">
    <citation type="journal article" date="2023" name="Eur. J. Med. Genet.">
        <title>Phenotype expansion and neurological manifestations of neurobehavioural disease caused by a variant in RFX7.</title>
        <authorList>
            <person name="Ledger M.L."/>
            <person name="Kaare M."/>
            <person name="Mailo J.A."/>
            <person name="Jain-Ghai S."/>
        </authorList>
    </citation>
    <scope>VARIANT MRD71 SER-1028</scope>
</reference>
<proteinExistence type="evidence at protein level"/>
<keyword id="KW-0002">3D-structure</keyword>
<keyword id="KW-0007">Acetylation</keyword>
<keyword id="KW-0025">Alternative splicing</keyword>
<keyword id="KW-1268">Autism spectrum disorder</keyword>
<keyword id="KW-0225">Disease variant</keyword>
<keyword id="KW-0238">DNA-binding</keyword>
<keyword id="KW-0991">Intellectual disability</keyword>
<keyword id="KW-0539">Nucleus</keyword>
<keyword id="KW-0597">Phosphoprotein</keyword>
<keyword id="KW-1267">Proteomics identification</keyword>
<keyword id="KW-1185">Reference proteome</keyword>
<keyword id="KW-0804">Transcription</keyword>
<keyword id="KW-0805">Transcription regulation</keyword>
<feature type="chain" id="PRO_0000342186" description="DNA-binding protein RFX7">
    <location>
        <begin position="1"/>
        <end position="1460"/>
    </location>
</feature>
<feature type="DNA-binding region" description="RFX-type winged-helix" evidence="2">
    <location>
        <begin position="108"/>
        <end position="183"/>
    </location>
</feature>
<feature type="region of interest" description="Disordered" evidence="3">
    <location>
        <begin position="1"/>
        <end position="34"/>
    </location>
</feature>
<feature type="region of interest" description="Disordered" evidence="3">
    <location>
        <begin position="308"/>
        <end position="352"/>
    </location>
</feature>
<feature type="region of interest" description="Disordered" evidence="3">
    <location>
        <begin position="404"/>
        <end position="428"/>
    </location>
</feature>
<feature type="region of interest" description="Disordered" evidence="3">
    <location>
        <begin position="481"/>
        <end position="585"/>
    </location>
</feature>
<feature type="region of interest" description="Disordered" evidence="3">
    <location>
        <begin position="632"/>
        <end position="715"/>
    </location>
</feature>
<feature type="region of interest" description="Disordered" evidence="3">
    <location>
        <begin position="917"/>
        <end position="1015"/>
    </location>
</feature>
<feature type="short sequence motif" description="PxLPxI/L motif; mediates interaction with ANKRA2 and RFXANK" evidence="5 12">
    <location>
        <begin position="188"/>
        <end position="193"/>
    </location>
</feature>
<feature type="compositionally biased region" description="Polar residues" evidence="3">
    <location>
        <begin position="337"/>
        <end position="352"/>
    </location>
</feature>
<feature type="compositionally biased region" description="Polar residues" evidence="3">
    <location>
        <begin position="404"/>
        <end position="416"/>
    </location>
</feature>
<feature type="compositionally biased region" description="Polar residues" evidence="3">
    <location>
        <begin position="481"/>
        <end position="513"/>
    </location>
</feature>
<feature type="compositionally biased region" description="Low complexity" evidence="3">
    <location>
        <begin position="515"/>
        <end position="535"/>
    </location>
</feature>
<feature type="compositionally biased region" description="Basic and acidic residues" evidence="3">
    <location>
        <begin position="537"/>
        <end position="549"/>
    </location>
</feature>
<feature type="compositionally biased region" description="Polar residues" evidence="3">
    <location>
        <begin position="563"/>
        <end position="583"/>
    </location>
</feature>
<feature type="compositionally biased region" description="Polar residues" evidence="3">
    <location>
        <begin position="632"/>
        <end position="644"/>
    </location>
</feature>
<feature type="compositionally biased region" description="Polar residues" evidence="3">
    <location>
        <begin position="705"/>
        <end position="715"/>
    </location>
</feature>
<feature type="compositionally biased region" description="Polar residues" evidence="3">
    <location>
        <begin position="917"/>
        <end position="933"/>
    </location>
</feature>
<feature type="compositionally biased region" description="Pro residues" evidence="3">
    <location>
        <begin position="947"/>
        <end position="963"/>
    </location>
</feature>
<feature type="compositionally biased region" description="Polar residues" evidence="3">
    <location>
        <begin position="971"/>
        <end position="1009"/>
    </location>
</feature>
<feature type="modified residue" description="Phosphoserine" evidence="17">
    <location>
        <position position="322"/>
    </location>
</feature>
<feature type="modified residue" description="Phosphoserine" evidence="14 17">
    <location>
        <position position="379"/>
    </location>
</feature>
<feature type="modified residue" description="Phosphoserine" evidence="17">
    <location>
        <position position="418"/>
    </location>
</feature>
<feature type="modified residue" description="Phosphoserine" evidence="14 17">
    <location>
        <position position="455"/>
    </location>
</feature>
<feature type="modified residue" description="Phosphothreonine" evidence="17">
    <location>
        <position position="564"/>
    </location>
</feature>
<feature type="modified residue" description="Phosphoserine" evidence="17">
    <location>
        <position position="662"/>
    </location>
</feature>
<feature type="modified residue" description="N6-acetyllysine" evidence="13">
    <location>
        <position position="704"/>
    </location>
</feature>
<feature type="modified residue" description="Phosphothreonine" evidence="14 17">
    <location>
        <position position="988"/>
    </location>
</feature>
<feature type="modified residue" description="Phosphoserine" evidence="14 15 16 17">
    <location>
        <position position="1178"/>
    </location>
</feature>
<feature type="modified residue" description="Phosphoserine" evidence="14">
    <location>
        <position position="1329"/>
    </location>
</feature>
<feature type="splice variant" id="VSP_062138" description="In isoform 3." evidence="10">
    <original>MAEEQQQPPPQQPDAHQQLPPSAPNSGVALPALVPGLPGTEASALQHKIKNSICKTVQSKVDCILQEVEKFTDLEKLYLYLQLPSGLSNGEKSDQNAM</original>
    <variation>M</variation>
    <location>
        <begin position="1"/>
        <end position="98"/>
    </location>
</feature>
<feature type="splice variant" id="VSP_062139" description="In isoform 2." evidence="10">
    <original>VGQGASDLTNTASDFSSDIRLSSELSGSINDLNTLDPNLLFDPGRQQGQDDEATLEELKNDPLFQQICSESMNSMTSSGFEWIESKDHPTVEMLG</original>
    <variation>CSCPSSLLAGMQM</variation>
    <location>
        <begin position="1366"/>
        <end position="1460"/>
    </location>
</feature>
<feature type="sequence variant" id="VAR_044135" description="In dbSNP:rs16976751.">
    <original>G</original>
    <variation>V</variation>
    <location>
        <position position="531"/>
    </location>
</feature>
<feature type="sequence variant" id="VAR_088507" description="In MRD71; likely pathogenic." evidence="7">
    <location>
        <begin position="742"/>
        <end position="1460"/>
    </location>
</feature>
<feature type="sequence variant" id="VAR_088508" description="In MRD71; likely pathogenic." evidence="7">
    <location>
        <begin position="745"/>
        <end position="1460"/>
    </location>
</feature>
<feature type="sequence variant" id="VAR_088509" description="In MRD71; likely pathogenic." evidence="7">
    <location>
        <begin position="762"/>
        <end position="1460"/>
    </location>
</feature>
<feature type="sequence variant" id="VAR_044136" description="In dbSNP:rs3803460.">
    <original>V</original>
    <variation>L</variation>
    <location>
        <position position="774"/>
    </location>
</feature>
<feature type="sequence variant" id="VAR_088510" description="In MRD71; likely pathogenic." evidence="7">
    <location>
        <begin position="906"/>
        <end position="1460"/>
    </location>
</feature>
<feature type="sequence variant" id="VAR_088511" description="In MRD71; uncertain significance; dbSNP:rs551989191." evidence="7">
    <location>
        <begin position="964"/>
        <end position="965"/>
    </location>
</feature>
<feature type="sequence variant" id="VAR_088512" description="In MRD71; uncertain significance." evidence="7">
    <original>P</original>
    <variation>L</variation>
    <location>
        <position position="1028"/>
    </location>
</feature>
<feature type="sequence variant" id="VAR_088513" description="In MRD71; uncertain significance." evidence="9">
    <original>P</original>
    <variation>S</variation>
    <location>
        <position position="1028"/>
    </location>
</feature>
<feature type="sequence variant" id="VAR_088514" description="In MRD71; uncertain significance." evidence="7">
    <original>I</original>
    <variation>V</variation>
    <location>
        <position position="1029"/>
    </location>
</feature>
<feature type="sequence variant" id="VAR_044137" description="In dbSNP:rs33984059.">
    <original>L</original>
    <variation>P</variation>
    <location>
        <position position="1353"/>
    </location>
</feature>
<feature type="sequence conflict" description="In Ref. 1; BAC86441." evidence="10" ref="1">
    <original>E</original>
    <variation>K</variation>
    <location>
        <position position="608"/>
    </location>
</feature>
<feature type="sequence conflict" description="In Ref. 1; BAC87248." evidence="10" ref="1">
    <original>H</original>
    <variation>R</variation>
    <location>
        <position position="836"/>
    </location>
</feature>
<feature type="sequence conflict" description="In Ref. 1; BAC87248." evidence="10" ref="1">
    <original>R</original>
    <variation>Q</variation>
    <location>
        <position position="1190"/>
    </location>
</feature>
<organism>
    <name type="scientific">Homo sapiens</name>
    <name type="common">Human</name>
    <dbReference type="NCBI Taxonomy" id="9606"/>
    <lineage>
        <taxon>Eukaryota</taxon>
        <taxon>Metazoa</taxon>
        <taxon>Chordata</taxon>
        <taxon>Craniata</taxon>
        <taxon>Vertebrata</taxon>
        <taxon>Euteleostomi</taxon>
        <taxon>Mammalia</taxon>
        <taxon>Eutheria</taxon>
        <taxon>Euarchontoglires</taxon>
        <taxon>Primates</taxon>
        <taxon>Haplorrhini</taxon>
        <taxon>Catarrhini</taxon>
        <taxon>Hominidae</taxon>
        <taxon>Homo</taxon>
    </lineage>
</organism>
<gene>
    <name evidence="11" type="primary">RFX7</name>
    <name type="synonym">RFXDC2</name>
</gene>
<sequence length="1460" mass="157351">MAEEQQQPPPQQPDAHQQLPPSAPNSGVALPALVPGLPGTEASALQHKIKNSICKTVQSKVDCILQEVEKFTDLEKLYLYLQLPSGLSNGEKSDQNAMSSSRAQQMHAFSWIRNTLEEHPETSLPKQEVYDEYKSYCDNLGYHPLSAADFGKIMKNVFPNMKARRLGTRGKSKYCYSGLRKKAFVHMPTLPNLDFHKTGDGLEGAEPSGQLQNIDEEVISSACRLVCEWAQKVLSQPFDTVLELARFLVKSHYIGTKSMAALTVMAAAPAGMKGITQPSAFIPTAESNSFQPQVKTLPSPIDAKQQLQRKIQKKQQEQKLQSPLPGESAAKKSESATSNGVTNLPNGNPSILSPQPIGIVVAAVPSPIPVQRTRQLVTSPSPMSSSDGKVLPLNVQVVTQHMQSVKQAPKTPQNVPASPGGDRSARHRYPQILPKPANTSALTIRSPTTVLFTSSPIKTAVVPASHMSSLNVVKMTTISLTPSNSNTPLKHSASVSSATGTTEESRSVPQIKNGSVVSLQSPGSRSSSAGGTSAVEVKVEPETSSDEHPVQCQENSDEAKAPQTPSALLGQKSNTDGALQKPSNEGVIEIKATKVCDQRTKCKSRCNEMLPGTSTGNNQSTITLSVASQNLTFTSSSSPPNGDSINKDPKLCTKSPRKRLSSTLQETQVPPVKKPIVEQLSAATIEGQKQGSVKKDQKVPHSGKTEGSTAGAQIPSKVSVNVSSHIGANQPLNSSALVISDSALEQQTTPSSSPDIKVKLEGSVFLLDSDSKSVGSFNPNGWQQITKDSEFISASCEQQQDISVMTIPEHSDINDLEKSVWELEGMPQDTYSQQLHSQIQESSLNQIQAHSSDQLPLQSELKEFEPSVSQTNESYFPFDDELTQDSIVEELVLMEQQMSMNNSHSYGNCLGMTLQSQSVTPGAPMSSHTSSTHFYHPIHSNGTPIHTPTPTPTPTPTPTPTPTPTSEMIAGSQSLSRESPCSRLAQTTPVDSALGSSRHTPIGTPHSNCSSSVPPSPVECRNPFAFTPISSSMAYHDASIVSSSPVKPMQRPMATHPDKTKLEWMNNGYSGVGNSSVSGHGILPSYQELVEDRFRKPHAFAVPGQSYQSQSRHHDTHFGRLTPVSPVQHQGATVNNTNKQEGFAVPAPLDNKGTNSSASSNFRCRSVSPAVHRQRNLSGSTLYPVSNIPRSNVTPFGSPVTPEVHVFTNVHTDACANNIAQRSQSVPLTVMMQTAFPNALQKQANSKKITNVLLSKLDSDNDDAVRGLGMNNLPSNYTARMNLTQILEPSTVFPSANPQNMIDSSTSVYEFQTPSYLTKSNSTGQINFSPGDNQAQSEIGEQQLDFNSTVKDLLSGDSLQTNQQLVGQGASDLTNTASDFSSDIRLSSELSGSINDLNTLDPNLLFDPGRQQGQDDEATLEELKNDPLFQQICSESMNSMTSSGFEWIESKDHPTVEMLG</sequence>
<protein>
    <recommendedName>
        <fullName evidence="10">DNA-binding protein RFX7</fullName>
    </recommendedName>
    <alternativeName>
        <fullName>Regulatory factor X 7</fullName>
    </alternativeName>
    <alternativeName>
        <fullName>Regulatory factor X domain-containing protein 2</fullName>
    </alternativeName>
</protein>